<gene>
    <name evidence="1" type="primary">slyX</name>
    <name type="ordered locus">APL_1639</name>
</gene>
<accession>A3N2T7</accession>
<comment type="similarity">
    <text evidence="1">Belongs to the SlyX family.</text>
</comment>
<protein>
    <recommendedName>
        <fullName evidence="1">Protein SlyX homolog</fullName>
    </recommendedName>
</protein>
<sequence>MTTENDLLNRIAELETKVAFQEITLEELNQALIHHQLALDKLQTQMRHFAEKLKGAQVSNIASQAEETPPPHY</sequence>
<feature type="chain" id="PRO_1000045711" description="Protein SlyX homolog">
    <location>
        <begin position="1"/>
        <end position="73"/>
    </location>
</feature>
<keyword id="KW-1185">Reference proteome</keyword>
<organism>
    <name type="scientific">Actinobacillus pleuropneumoniae serotype 5b (strain L20)</name>
    <dbReference type="NCBI Taxonomy" id="416269"/>
    <lineage>
        <taxon>Bacteria</taxon>
        <taxon>Pseudomonadati</taxon>
        <taxon>Pseudomonadota</taxon>
        <taxon>Gammaproteobacteria</taxon>
        <taxon>Pasteurellales</taxon>
        <taxon>Pasteurellaceae</taxon>
        <taxon>Actinobacillus</taxon>
    </lineage>
</organism>
<name>SLYX_ACTP2</name>
<evidence type="ECO:0000255" key="1">
    <source>
        <dbReference type="HAMAP-Rule" id="MF_00715"/>
    </source>
</evidence>
<proteinExistence type="inferred from homology"/>
<reference key="1">
    <citation type="journal article" date="2008" name="J. Bacteriol.">
        <title>The complete genome sequence of Actinobacillus pleuropneumoniae L20 (serotype 5b).</title>
        <authorList>
            <person name="Foote S.J."/>
            <person name="Bosse J.T."/>
            <person name="Bouevitch A.B."/>
            <person name="Langford P.R."/>
            <person name="Young N.M."/>
            <person name="Nash J.H.E."/>
        </authorList>
    </citation>
    <scope>NUCLEOTIDE SEQUENCE [LARGE SCALE GENOMIC DNA]</scope>
    <source>
        <strain>L20</strain>
    </source>
</reference>
<dbReference type="EMBL" id="CP000569">
    <property type="protein sequence ID" value="ABN74723.1"/>
    <property type="molecule type" value="Genomic_DNA"/>
</dbReference>
<dbReference type="RefSeq" id="WP_005599039.1">
    <property type="nucleotide sequence ID" value="NC_009053.1"/>
</dbReference>
<dbReference type="SMR" id="A3N2T7"/>
<dbReference type="STRING" id="416269.APL_1639"/>
<dbReference type="EnsemblBacteria" id="ABN74723">
    <property type="protein sequence ID" value="ABN74723"/>
    <property type="gene ID" value="APL_1639"/>
</dbReference>
<dbReference type="KEGG" id="apl:APL_1639"/>
<dbReference type="eggNOG" id="COG2900">
    <property type="taxonomic scope" value="Bacteria"/>
</dbReference>
<dbReference type="HOGENOM" id="CLU_180796_4_2_6"/>
<dbReference type="Proteomes" id="UP000001432">
    <property type="component" value="Chromosome"/>
</dbReference>
<dbReference type="Gene3D" id="1.20.5.300">
    <property type="match status" value="1"/>
</dbReference>
<dbReference type="HAMAP" id="MF_00715">
    <property type="entry name" value="SlyX"/>
    <property type="match status" value="1"/>
</dbReference>
<dbReference type="InterPro" id="IPR007236">
    <property type="entry name" value="SlyX"/>
</dbReference>
<dbReference type="NCBIfam" id="NF002556">
    <property type="entry name" value="PRK02119.1"/>
    <property type="match status" value="1"/>
</dbReference>
<dbReference type="PANTHER" id="PTHR36508">
    <property type="entry name" value="PROTEIN SLYX"/>
    <property type="match status" value="1"/>
</dbReference>
<dbReference type="PANTHER" id="PTHR36508:SF1">
    <property type="entry name" value="PROTEIN SLYX"/>
    <property type="match status" value="1"/>
</dbReference>
<dbReference type="Pfam" id="PF04102">
    <property type="entry name" value="SlyX"/>
    <property type="match status" value="1"/>
</dbReference>